<organism>
    <name type="scientific">Sinapis alba</name>
    <name type="common">White mustard</name>
    <name type="synonym">Brassica hirta</name>
    <dbReference type="NCBI Taxonomy" id="3728"/>
    <lineage>
        <taxon>Eukaryota</taxon>
        <taxon>Viridiplantae</taxon>
        <taxon>Streptophyta</taxon>
        <taxon>Embryophyta</taxon>
        <taxon>Tracheophyta</taxon>
        <taxon>Spermatophyta</taxon>
        <taxon>Magnoliopsida</taxon>
        <taxon>eudicotyledons</taxon>
        <taxon>Gunneridae</taxon>
        <taxon>Pentapetalae</taxon>
        <taxon>rosids</taxon>
        <taxon>malvids</taxon>
        <taxon>Brassicales</taxon>
        <taxon>Brassicaceae</taxon>
        <taxon>Brassiceae</taxon>
        <taxon>Sinapis</taxon>
    </lineage>
</organism>
<evidence type="ECO:0000250" key="1"/>
<evidence type="ECO:0000255" key="2"/>
<evidence type="ECO:0000255" key="3">
    <source>
        <dbReference type="PROSITE-ProRule" id="PRU10055"/>
    </source>
</evidence>
<evidence type="ECO:0000305" key="4"/>
<keyword id="KW-0903">Direct protein sequencing</keyword>
<keyword id="KW-0325">Glycoprotein</keyword>
<keyword id="KW-0326">Glycosidase</keyword>
<keyword id="KW-0378">Hydrolase</keyword>
<keyword id="KW-0926">Vacuole</keyword>
<feature type="chain" id="PRO_0000063902" description="Myrosinase MB1">
    <location>
        <begin position="1" status="less than"/>
        <end position="244"/>
    </location>
</feature>
<feature type="active site" description="Nucleophile" evidence="3">
    <location>
        <position position="125"/>
    </location>
</feature>
<feature type="binding site" evidence="1">
    <location>
        <position position="51"/>
    </location>
    <ligand>
        <name>substrate</name>
    </ligand>
</feature>
<feature type="binding site" evidence="1">
    <location>
        <position position="173"/>
    </location>
    <ligand>
        <name>substrate</name>
    </ligand>
</feature>
<feature type="binding site" evidence="1">
    <location>
        <begin position="180"/>
        <end position="181"/>
    </location>
    <ligand>
        <name>substrate</name>
    </ligand>
</feature>
<feature type="glycosylation site" description="N-linked (GlcNAc...) asparagine" evidence="2">
    <location>
        <position position="32"/>
    </location>
</feature>
<feature type="glycosylation site" description="N-linked (GlcNAc...) asparagine" evidence="2">
    <location>
        <position position="216"/>
    </location>
</feature>
<feature type="non-terminal residue">
    <location>
        <position position="1"/>
    </location>
</feature>
<proteinExistence type="evidence at protein level"/>
<protein>
    <recommendedName>
        <fullName>Myrosinase MB1</fullName>
        <ecNumber>3.2.1.147</ecNumber>
    </recommendedName>
    <alternativeName>
        <fullName>Sinigrinase</fullName>
    </alternativeName>
    <alternativeName>
        <fullName>Thioglucosidase</fullName>
    </alternativeName>
</protein>
<dbReference type="EC" id="3.2.1.147"/>
<dbReference type="EMBL" id="X59881">
    <property type="protein sequence ID" value="CAA42536.1"/>
    <property type="molecule type" value="mRNA"/>
</dbReference>
<dbReference type="PIR" id="S19147">
    <property type="entry name" value="S19147"/>
</dbReference>
<dbReference type="SMR" id="P29737"/>
<dbReference type="CAZy" id="GH1">
    <property type="family name" value="Glycoside Hydrolase Family 1"/>
</dbReference>
<dbReference type="GO" id="GO:0005773">
    <property type="term" value="C:vacuole"/>
    <property type="evidence" value="ECO:0007669"/>
    <property type="project" value="UniProtKB-SubCell"/>
</dbReference>
<dbReference type="GO" id="GO:0008422">
    <property type="term" value="F:beta-glucosidase activity"/>
    <property type="evidence" value="ECO:0007669"/>
    <property type="project" value="TreeGrafter"/>
</dbReference>
<dbReference type="GO" id="GO:0019137">
    <property type="term" value="F:thioglucosidase activity"/>
    <property type="evidence" value="ECO:0007669"/>
    <property type="project" value="UniProtKB-EC"/>
</dbReference>
<dbReference type="GO" id="GO:0005975">
    <property type="term" value="P:carbohydrate metabolic process"/>
    <property type="evidence" value="ECO:0007669"/>
    <property type="project" value="InterPro"/>
</dbReference>
<dbReference type="Gene3D" id="3.20.20.80">
    <property type="entry name" value="Glycosidases"/>
    <property type="match status" value="1"/>
</dbReference>
<dbReference type="InterPro" id="IPR001360">
    <property type="entry name" value="Glyco_hydro_1"/>
</dbReference>
<dbReference type="InterPro" id="IPR018120">
    <property type="entry name" value="Glyco_hydro_1_AS"/>
</dbReference>
<dbReference type="InterPro" id="IPR017853">
    <property type="entry name" value="Glycoside_hydrolase_SF"/>
</dbReference>
<dbReference type="PANTHER" id="PTHR10353">
    <property type="entry name" value="GLYCOSYL HYDROLASE"/>
    <property type="match status" value="1"/>
</dbReference>
<dbReference type="PANTHER" id="PTHR10353:SF218">
    <property type="entry name" value="MYROSINASE 1-RELATED"/>
    <property type="match status" value="1"/>
</dbReference>
<dbReference type="Pfam" id="PF00232">
    <property type="entry name" value="Glyco_hydro_1"/>
    <property type="match status" value="1"/>
</dbReference>
<dbReference type="PRINTS" id="PR00131">
    <property type="entry name" value="GLHYDRLASE1"/>
</dbReference>
<dbReference type="SUPFAM" id="SSF51445">
    <property type="entry name" value="(Trans)glycosidases"/>
    <property type="match status" value="1"/>
</dbReference>
<dbReference type="PROSITE" id="PS00572">
    <property type="entry name" value="GLYCOSYL_HYDROL_F1_1"/>
    <property type="match status" value="1"/>
</dbReference>
<name>MYR1_SINAL</name>
<accession>P29737</accession>
<reference key="1">
    <citation type="journal article" date="1992" name="Plant Mol. Biol.">
        <title>The glucosinolate-degrading enzyme myrosinase in Brassicaceae is encoded by a gene family.</title>
        <authorList>
            <person name="Xue J."/>
            <person name="Lenman M."/>
            <person name="Falk A."/>
            <person name="Rask L."/>
        </authorList>
    </citation>
    <scope>NUCLEOTIDE SEQUENCE [MRNA]</scope>
    <scope>PARTIAL PROTEIN SEQUENCE</scope>
    <source>
        <strain>cv. Maxi</strain>
        <tissue>Seed</tissue>
    </source>
</reference>
<comment type="function">
    <text>Degradation of glucosinolates (glucose residue linked by a thioglucoside bound to an amino acid derivative) to glucose, sulfate and any of the products: thiocyanates, isothiocyanates, nitriles, epithionitriles or oxazolidine-2-thiones.</text>
</comment>
<comment type="catalytic activity">
    <reaction>
        <text>a thioglucoside + H2O = a sugar + a thiol.</text>
        <dbReference type="EC" id="3.2.1.147"/>
    </reaction>
</comment>
<comment type="subunit">
    <text>Homodimer.</text>
</comment>
<comment type="subcellular location">
    <subcellularLocation>
        <location>Vacuole</location>
    </subcellularLocation>
</comment>
<comment type="tissue specificity">
    <text>In vacuoles called myrosin grains of a certain class of cells, myrosin cells, distributed in the cotyledons and the axis of the embryo as well as in different organs of the growing plant.</text>
</comment>
<comment type="similarity">
    <text evidence="4">Belongs to the glycosyl hydrolase 1 family.</text>
</comment>
<sequence length="244" mass="28163">EFFHGWYMEPLTKGRYPAIMRKIVGSRLPKFNKTEAKLVTGSYDFLGLNYYVTQYAKPKPNPYPSETHTAMMDAGVDLTFKNSRGEYPGPVFAEDANSYYYPKGIYYVMDYFKTKYGNPLIYITENGISTPGSENRCEAIADYKRIDYLCSHLCFLRKVIKEKGVNVRGYFAWALGDNYEFGKGFTVRFGLSYVNWDNLDDRNLKESGKWYQRFINGTAKNSAKQDFLRSSLSSQSQKKRLADA</sequence>